<dbReference type="EC" id="4.2.1.19" evidence="1"/>
<dbReference type="EMBL" id="CP000029">
    <property type="protein sequence ID" value="AAW53201.1"/>
    <property type="molecule type" value="Genomic_DNA"/>
</dbReference>
<dbReference type="RefSeq" id="WP_002470279.1">
    <property type="nucleotide sequence ID" value="NC_002976.3"/>
</dbReference>
<dbReference type="SMR" id="Q5HKN9"/>
<dbReference type="STRING" id="176279.SERP2304"/>
<dbReference type="KEGG" id="ser:SERP2304"/>
<dbReference type="eggNOG" id="COG0131">
    <property type="taxonomic scope" value="Bacteria"/>
</dbReference>
<dbReference type="HOGENOM" id="CLU_044308_3_0_9"/>
<dbReference type="UniPathway" id="UPA00031">
    <property type="reaction ID" value="UER00011"/>
</dbReference>
<dbReference type="Proteomes" id="UP000000531">
    <property type="component" value="Chromosome"/>
</dbReference>
<dbReference type="GO" id="GO:0005737">
    <property type="term" value="C:cytoplasm"/>
    <property type="evidence" value="ECO:0007669"/>
    <property type="project" value="UniProtKB-SubCell"/>
</dbReference>
<dbReference type="GO" id="GO:0004424">
    <property type="term" value="F:imidazoleglycerol-phosphate dehydratase activity"/>
    <property type="evidence" value="ECO:0007669"/>
    <property type="project" value="UniProtKB-UniRule"/>
</dbReference>
<dbReference type="GO" id="GO:0000105">
    <property type="term" value="P:L-histidine biosynthetic process"/>
    <property type="evidence" value="ECO:0007669"/>
    <property type="project" value="UniProtKB-UniRule"/>
</dbReference>
<dbReference type="CDD" id="cd07914">
    <property type="entry name" value="IGPD"/>
    <property type="match status" value="1"/>
</dbReference>
<dbReference type="FunFam" id="3.30.230.40:FF:000001">
    <property type="entry name" value="Imidazoleglycerol-phosphate dehydratase HisB"/>
    <property type="match status" value="1"/>
</dbReference>
<dbReference type="FunFam" id="3.30.230.40:FF:000003">
    <property type="entry name" value="Imidazoleglycerol-phosphate dehydratase HisB"/>
    <property type="match status" value="1"/>
</dbReference>
<dbReference type="Gene3D" id="3.30.230.40">
    <property type="entry name" value="Imidazole glycerol phosphate dehydratase, domain 1"/>
    <property type="match status" value="2"/>
</dbReference>
<dbReference type="HAMAP" id="MF_00076">
    <property type="entry name" value="HisB"/>
    <property type="match status" value="1"/>
</dbReference>
<dbReference type="InterPro" id="IPR038494">
    <property type="entry name" value="IGPD_sf"/>
</dbReference>
<dbReference type="InterPro" id="IPR000807">
    <property type="entry name" value="ImidazoleglycerolP_deHydtase"/>
</dbReference>
<dbReference type="InterPro" id="IPR020565">
    <property type="entry name" value="ImidazoleglycerP_deHydtase_CS"/>
</dbReference>
<dbReference type="InterPro" id="IPR020568">
    <property type="entry name" value="Ribosomal_Su5_D2-typ_SF"/>
</dbReference>
<dbReference type="NCBIfam" id="NF002107">
    <property type="entry name" value="PRK00951.1-2"/>
    <property type="match status" value="1"/>
</dbReference>
<dbReference type="NCBIfam" id="NF002111">
    <property type="entry name" value="PRK00951.2-1"/>
    <property type="match status" value="1"/>
</dbReference>
<dbReference type="NCBIfam" id="NF002114">
    <property type="entry name" value="PRK00951.2-4"/>
    <property type="match status" value="1"/>
</dbReference>
<dbReference type="PANTHER" id="PTHR23133:SF2">
    <property type="entry name" value="IMIDAZOLEGLYCEROL-PHOSPHATE DEHYDRATASE"/>
    <property type="match status" value="1"/>
</dbReference>
<dbReference type="PANTHER" id="PTHR23133">
    <property type="entry name" value="IMIDAZOLEGLYCEROL-PHOSPHATE DEHYDRATASE HIS7"/>
    <property type="match status" value="1"/>
</dbReference>
<dbReference type="Pfam" id="PF00475">
    <property type="entry name" value="IGPD"/>
    <property type="match status" value="1"/>
</dbReference>
<dbReference type="SUPFAM" id="SSF54211">
    <property type="entry name" value="Ribosomal protein S5 domain 2-like"/>
    <property type="match status" value="2"/>
</dbReference>
<dbReference type="PROSITE" id="PS00954">
    <property type="entry name" value="IGP_DEHYDRATASE_1"/>
    <property type="match status" value="1"/>
</dbReference>
<dbReference type="PROSITE" id="PS00955">
    <property type="entry name" value="IGP_DEHYDRATASE_2"/>
    <property type="match status" value="1"/>
</dbReference>
<comment type="catalytic activity">
    <reaction evidence="1">
        <text>D-erythro-1-(imidazol-4-yl)glycerol 3-phosphate = 3-(imidazol-4-yl)-2-oxopropyl phosphate + H2O</text>
        <dbReference type="Rhea" id="RHEA:11040"/>
        <dbReference type="ChEBI" id="CHEBI:15377"/>
        <dbReference type="ChEBI" id="CHEBI:57766"/>
        <dbReference type="ChEBI" id="CHEBI:58278"/>
        <dbReference type="EC" id="4.2.1.19"/>
    </reaction>
</comment>
<comment type="pathway">
    <text evidence="1">Amino-acid biosynthesis; L-histidine biosynthesis; L-histidine from 5-phospho-alpha-D-ribose 1-diphosphate: step 6/9.</text>
</comment>
<comment type="subcellular location">
    <subcellularLocation>
        <location evidence="1">Cytoplasm</location>
    </subcellularLocation>
</comment>
<comment type="similarity">
    <text evidence="1">Belongs to the imidazoleglycerol-phosphate dehydratase family.</text>
</comment>
<sequence length="192" mass="21446">MNYQIKRNTEETQLNISLANNGTQSHINTGVGFLDHMLTLFTFHSGLTLSIEATGDTYVDDHHITEDIGIVIGQLLLELIKTQQSFTRYGCSYVPMDEALARTVVDISGRPYFSFNSKLSAQKVGTFDTELVEEFFRALIINARLTVHIDLLRGGNTHHEIEAIFKSFARALKISLAQNEDGRIPSSKGVIE</sequence>
<feature type="chain" id="PRO_0000158172" description="Imidazoleglycerol-phosphate dehydratase">
    <location>
        <begin position="1"/>
        <end position="192"/>
    </location>
</feature>
<evidence type="ECO:0000255" key="1">
    <source>
        <dbReference type="HAMAP-Rule" id="MF_00076"/>
    </source>
</evidence>
<name>HIS7_STAEQ</name>
<accession>Q5HKN9</accession>
<proteinExistence type="inferred from homology"/>
<organism>
    <name type="scientific">Staphylococcus epidermidis (strain ATCC 35984 / DSM 28319 / BCRC 17069 / CCUG 31568 / BM 3577 / RP62A)</name>
    <dbReference type="NCBI Taxonomy" id="176279"/>
    <lineage>
        <taxon>Bacteria</taxon>
        <taxon>Bacillati</taxon>
        <taxon>Bacillota</taxon>
        <taxon>Bacilli</taxon>
        <taxon>Bacillales</taxon>
        <taxon>Staphylococcaceae</taxon>
        <taxon>Staphylococcus</taxon>
    </lineage>
</organism>
<reference key="1">
    <citation type="journal article" date="2005" name="J. Bacteriol.">
        <title>Insights on evolution of virulence and resistance from the complete genome analysis of an early methicillin-resistant Staphylococcus aureus strain and a biofilm-producing methicillin-resistant Staphylococcus epidermidis strain.</title>
        <authorList>
            <person name="Gill S.R."/>
            <person name="Fouts D.E."/>
            <person name="Archer G.L."/>
            <person name="Mongodin E.F."/>
            <person name="DeBoy R.T."/>
            <person name="Ravel J."/>
            <person name="Paulsen I.T."/>
            <person name="Kolonay J.F."/>
            <person name="Brinkac L.M."/>
            <person name="Beanan M.J."/>
            <person name="Dodson R.J."/>
            <person name="Daugherty S.C."/>
            <person name="Madupu R."/>
            <person name="Angiuoli S.V."/>
            <person name="Durkin A.S."/>
            <person name="Haft D.H."/>
            <person name="Vamathevan J.J."/>
            <person name="Khouri H."/>
            <person name="Utterback T.R."/>
            <person name="Lee C."/>
            <person name="Dimitrov G."/>
            <person name="Jiang L."/>
            <person name="Qin H."/>
            <person name="Weidman J."/>
            <person name="Tran K."/>
            <person name="Kang K.H."/>
            <person name="Hance I.R."/>
            <person name="Nelson K.E."/>
            <person name="Fraser C.M."/>
        </authorList>
    </citation>
    <scope>NUCLEOTIDE SEQUENCE [LARGE SCALE GENOMIC DNA]</scope>
    <source>
        <strain>ATCC 35984 / DSM 28319 / BCRC 17069 / CCUG 31568 / BM 3577 / RP62A</strain>
    </source>
</reference>
<keyword id="KW-0028">Amino-acid biosynthesis</keyword>
<keyword id="KW-0963">Cytoplasm</keyword>
<keyword id="KW-0368">Histidine biosynthesis</keyword>
<keyword id="KW-0456">Lyase</keyword>
<keyword id="KW-1185">Reference proteome</keyword>
<gene>
    <name evidence="1" type="primary">hisB</name>
    <name type="ordered locus">SERP2304</name>
</gene>
<protein>
    <recommendedName>
        <fullName evidence="1">Imidazoleglycerol-phosphate dehydratase</fullName>
        <shortName evidence="1">IGPD</shortName>
        <ecNumber evidence="1">4.2.1.19</ecNumber>
    </recommendedName>
</protein>